<sequence>MDIVTDKNIGSNFLADSNNRIYILIGDTDNVIDKYLVSILGKIEFYYVYEITVEDSKLINTFVTSNLLCPIKNKFNIKIYHDYKKVIGSCILNVDGKFTRYKDPSKLHVYVFCYRYNNCLNTCTMVKCHELLYPEKEIIVDGYKINDMSFFYTNPEIIKQHTDIKDYETLYKNIFLRRELNRVILGKPSDLIETLKEIVTINSEDIWKVIVSNDIFDSRDVIKLINFDYDREDFLSFVRAWYSNQLNNCKEDNNKIEKVYEIVRNSI</sequence>
<dbReference type="EMBL" id="AY318871">
    <property type="protein sequence ID" value="AAR83439.1"/>
    <property type="molecule type" value="Genomic_DNA"/>
</dbReference>
<dbReference type="RefSeq" id="NP_955116.1">
    <property type="nucleotide sequence ID" value="NC_005309.1"/>
</dbReference>
<dbReference type="GeneID" id="2700169"/>
<dbReference type="KEGG" id="vg:2700169"/>
<dbReference type="OrthoDB" id="14516at10239"/>
<dbReference type="Proteomes" id="UP000168164">
    <property type="component" value="Genome"/>
</dbReference>
<dbReference type="GO" id="GO:0044423">
    <property type="term" value="C:virion component"/>
    <property type="evidence" value="ECO:0007669"/>
    <property type="project" value="UniProtKB-KW"/>
</dbReference>
<dbReference type="InterPro" id="IPR007660">
    <property type="entry name" value="Poxvirus_D3"/>
</dbReference>
<dbReference type="Pfam" id="PF04580">
    <property type="entry name" value="Pox_D3"/>
    <property type="match status" value="1"/>
</dbReference>
<protein>
    <recommendedName>
        <fullName>27 kDa core protein</fullName>
    </recommendedName>
</protein>
<reference key="1">
    <citation type="journal article" date="2004" name="J. Virol.">
        <title>The genome of canarypox virus.</title>
        <authorList>
            <person name="Tulman E.R."/>
            <person name="Afonso C.L."/>
            <person name="Lu Z."/>
            <person name="Zsak L."/>
            <person name="Kutish G.F."/>
            <person name="Rock D.L."/>
        </authorList>
    </citation>
    <scope>NUCLEOTIDE SEQUENCE [LARGE SCALE GENOMIC DNA]</scope>
    <source>
        <strain>Isolate ATCC VR-111 / Wheatley C93</strain>
    </source>
</reference>
<organism>
    <name type="scientific">Canarypox virus</name>
    <name type="common">CNPV</name>
    <dbReference type="NCBI Taxonomy" id="44088"/>
    <lineage>
        <taxon>Viruses</taxon>
        <taxon>Varidnaviria</taxon>
        <taxon>Bamfordvirae</taxon>
        <taxon>Nucleocytoviricota</taxon>
        <taxon>Pokkesviricetes</taxon>
        <taxon>Chitovirales</taxon>
        <taxon>Poxviridae</taxon>
        <taxon>Chordopoxvirinae</taxon>
        <taxon>Avipoxvirus</taxon>
    </lineage>
</organism>
<accession>Q6VZQ4</accession>
<keyword id="KW-0426">Late protein</keyword>
<keyword id="KW-1185">Reference proteome</keyword>
<keyword id="KW-0946">Virion</keyword>
<proteinExistence type="evidence at transcript level"/>
<organismHost>
    <name type="scientific">Serinus</name>
    <dbReference type="NCBI Taxonomy" id="9134"/>
</organismHost>
<evidence type="ECO:0000250" key="1"/>
<evidence type="ECO:0000305" key="2"/>
<feature type="chain" id="PRO_0000099434" description="27 kDa core protein">
    <location>
        <begin position="1"/>
        <end position="267"/>
    </location>
</feature>
<name>D3_CNPV</name>
<comment type="function">
    <text evidence="1">Late protein which is part of a large complex required for early virion morphogenesis. This complex participates in the formation of virosomes and the incorporation of virosomal contents into nascent immature virions (By similarity).</text>
</comment>
<comment type="subcellular location">
    <subcellularLocation>
        <location evidence="1">Virion</location>
    </subcellularLocation>
    <text evidence="1">Localizes to the virion core.</text>
</comment>
<comment type="induction">
    <text>Expressed in the late phase of the viral replicative cycle.</text>
</comment>
<comment type="similarity">
    <text evidence="2">Belongs to the chordopoxvirinae D3 family.</text>
</comment>
<gene>
    <name type="ordered locus">CNPV093</name>
</gene>